<reference key="1">
    <citation type="journal article" date="2005" name="Proc. Natl. Acad. Sci. U.S.A.">
        <title>The genome of Salinibacter ruber: convergence and gene exchange among hyperhalophilic bacteria and archaea.</title>
        <authorList>
            <person name="Mongodin E.F."/>
            <person name="Nelson K.E."/>
            <person name="Daugherty S."/>
            <person name="DeBoy R.T."/>
            <person name="Wister J."/>
            <person name="Khouri H."/>
            <person name="Weidman J."/>
            <person name="Walsh D.A."/>
            <person name="Papke R.T."/>
            <person name="Sanchez Perez G."/>
            <person name="Sharma A.K."/>
            <person name="Nesbo C.L."/>
            <person name="MacLeod D."/>
            <person name="Bapteste E."/>
            <person name="Doolittle W.F."/>
            <person name="Charlebois R.L."/>
            <person name="Legault B."/>
            <person name="Rodriguez-Valera F."/>
        </authorList>
    </citation>
    <scope>NUCLEOTIDE SEQUENCE [LARGE SCALE GENOMIC DNA]</scope>
    <source>
        <strain>DSM 13855 / CECT 5946 / M31</strain>
    </source>
</reference>
<name>ISPD_SALRD</name>
<accession>Q2S210</accession>
<protein>
    <recommendedName>
        <fullName evidence="1">2-C-methyl-D-erythritol 4-phosphate cytidylyltransferase</fullName>
        <ecNumber evidence="1">2.7.7.60</ecNumber>
    </recommendedName>
    <alternativeName>
        <fullName evidence="1">4-diphosphocytidyl-2C-methyl-D-erythritol synthase</fullName>
    </alternativeName>
    <alternativeName>
        <fullName evidence="1">MEP cytidylyltransferase</fullName>
        <shortName evidence="1">MCT</shortName>
    </alternativeName>
</protein>
<organism>
    <name type="scientific">Salinibacter ruber (strain DSM 13855 / M31)</name>
    <dbReference type="NCBI Taxonomy" id="309807"/>
    <lineage>
        <taxon>Bacteria</taxon>
        <taxon>Pseudomonadati</taxon>
        <taxon>Rhodothermota</taxon>
        <taxon>Rhodothermia</taxon>
        <taxon>Rhodothermales</taxon>
        <taxon>Salinibacteraceae</taxon>
        <taxon>Salinibacter</taxon>
    </lineage>
</organism>
<gene>
    <name evidence="1" type="primary">ispD</name>
    <name type="ordered locus">SRU_1652</name>
</gene>
<dbReference type="EC" id="2.7.7.60" evidence="1"/>
<dbReference type="EMBL" id="CP000159">
    <property type="protein sequence ID" value="ABC44465.1"/>
    <property type="molecule type" value="Genomic_DNA"/>
</dbReference>
<dbReference type="RefSeq" id="YP_445771.1">
    <property type="nucleotide sequence ID" value="NC_007677.1"/>
</dbReference>
<dbReference type="SMR" id="Q2S210"/>
<dbReference type="STRING" id="309807.SRU_1652"/>
<dbReference type="EnsemblBacteria" id="ABC44465">
    <property type="protein sequence ID" value="ABC44465"/>
    <property type="gene ID" value="SRU_1652"/>
</dbReference>
<dbReference type="KEGG" id="sru:SRU_1652"/>
<dbReference type="PATRIC" id="fig|309807.25.peg.1713"/>
<dbReference type="eggNOG" id="COG1211">
    <property type="taxonomic scope" value="Bacteria"/>
</dbReference>
<dbReference type="HOGENOM" id="CLU_061281_2_2_10"/>
<dbReference type="OrthoDB" id="9806837at2"/>
<dbReference type="UniPathway" id="UPA00056">
    <property type="reaction ID" value="UER00093"/>
</dbReference>
<dbReference type="Proteomes" id="UP000008674">
    <property type="component" value="Chromosome"/>
</dbReference>
<dbReference type="GO" id="GO:0050518">
    <property type="term" value="F:2-C-methyl-D-erythritol 4-phosphate cytidylyltransferase activity"/>
    <property type="evidence" value="ECO:0007669"/>
    <property type="project" value="UniProtKB-UniRule"/>
</dbReference>
<dbReference type="GO" id="GO:0019288">
    <property type="term" value="P:isopentenyl diphosphate biosynthetic process, methylerythritol 4-phosphate pathway"/>
    <property type="evidence" value="ECO:0007669"/>
    <property type="project" value="UniProtKB-UniRule"/>
</dbReference>
<dbReference type="CDD" id="cd02516">
    <property type="entry name" value="CDP-ME_synthetase"/>
    <property type="match status" value="1"/>
</dbReference>
<dbReference type="FunFam" id="3.90.550.10:FF:000003">
    <property type="entry name" value="2-C-methyl-D-erythritol 4-phosphate cytidylyltransferase"/>
    <property type="match status" value="1"/>
</dbReference>
<dbReference type="Gene3D" id="3.90.550.10">
    <property type="entry name" value="Spore Coat Polysaccharide Biosynthesis Protein SpsA, Chain A"/>
    <property type="match status" value="1"/>
</dbReference>
<dbReference type="HAMAP" id="MF_00108">
    <property type="entry name" value="IspD"/>
    <property type="match status" value="1"/>
</dbReference>
<dbReference type="InterPro" id="IPR001228">
    <property type="entry name" value="IspD"/>
</dbReference>
<dbReference type="InterPro" id="IPR034683">
    <property type="entry name" value="IspD/TarI"/>
</dbReference>
<dbReference type="InterPro" id="IPR050088">
    <property type="entry name" value="IspD/TarI_cytidylyltransf_bact"/>
</dbReference>
<dbReference type="InterPro" id="IPR018294">
    <property type="entry name" value="ISPD_synthase_CS"/>
</dbReference>
<dbReference type="InterPro" id="IPR029044">
    <property type="entry name" value="Nucleotide-diphossugar_trans"/>
</dbReference>
<dbReference type="NCBIfam" id="TIGR00453">
    <property type="entry name" value="ispD"/>
    <property type="match status" value="1"/>
</dbReference>
<dbReference type="PANTHER" id="PTHR32125">
    <property type="entry name" value="2-C-METHYL-D-ERYTHRITOL 4-PHOSPHATE CYTIDYLYLTRANSFERASE, CHLOROPLASTIC"/>
    <property type="match status" value="1"/>
</dbReference>
<dbReference type="PANTHER" id="PTHR32125:SF4">
    <property type="entry name" value="2-C-METHYL-D-ERYTHRITOL 4-PHOSPHATE CYTIDYLYLTRANSFERASE, CHLOROPLASTIC"/>
    <property type="match status" value="1"/>
</dbReference>
<dbReference type="Pfam" id="PF01128">
    <property type="entry name" value="IspD"/>
    <property type="match status" value="1"/>
</dbReference>
<dbReference type="SUPFAM" id="SSF53448">
    <property type="entry name" value="Nucleotide-diphospho-sugar transferases"/>
    <property type="match status" value="1"/>
</dbReference>
<dbReference type="PROSITE" id="PS01295">
    <property type="entry name" value="ISPD"/>
    <property type="match status" value="1"/>
</dbReference>
<evidence type="ECO:0000255" key="1">
    <source>
        <dbReference type="HAMAP-Rule" id="MF_00108"/>
    </source>
</evidence>
<proteinExistence type="inferred from homology"/>
<sequence>MAVLIPAAGGGRRLGGRPKQFRALGEHPVLVQVLLSFERHPAVGHAVVAAPESRVTDVTDRLQAEGLSVLTAVVGGGADRQSSVQHALRAVPDPVNTVLVHDAARPFVAAAQVQAVVQAVRTGGAASLVVPVADTLRRGDADRLGETVSRDGLYRMQTPQGFRREWLEHAHRRASAEDLAATDDVALVQHLDHDVAPVPGSRRNFKITTPDDWALAQALWPTWRDAPERFDLSSSASS</sequence>
<comment type="function">
    <text evidence="1">Catalyzes the formation of 4-diphosphocytidyl-2-C-methyl-D-erythritol from CTP and 2-C-methyl-D-erythritol 4-phosphate (MEP).</text>
</comment>
<comment type="catalytic activity">
    <reaction evidence="1">
        <text>2-C-methyl-D-erythritol 4-phosphate + CTP + H(+) = 4-CDP-2-C-methyl-D-erythritol + diphosphate</text>
        <dbReference type="Rhea" id="RHEA:13429"/>
        <dbReference type="ChEBI" id="CHEBI:15378"/>
        <dbReference type="ChEBI" id="CHEBI:33019"/>
        <dbReference type="ChEBI" id="CHEBI:37563"/>
        <dbReference type="ChEBI" id="CHEBI:57823"/>
        <dbReference type="ChEBI" id="CHEBI:58262"/>
        <dbReference type="EC" id="2.7.7.60"/>
    </reaction>
</comment>
<comment type="pathway">
    <text evidence="1">Isoprenoid biosynthesis; isopentenyl diphosphate biosynthesis via DXP pathway; isopentenyl diphosphate from 1-deoxy-D-xylulose 5-phosphate: step 2/6.</text>
</comment>
<comment type="similarity">
    <text evidence="1">Belongs to the IspD/TarI cytidylyltransferase family. IspD subfamily.</text>
</comment>
<feature type="chain" id="PRO_0000237816" description="2-C-methyl-D-erythritol 4-phosphate cytidylyltransferase">
    <location>
        <begin position="1"/>
        <end position="238"/>
    </location>
</feature>
<feature type="site" description="Transition state stabilizer" evidence="1">
    <location>
        <position position="13"/>
    </location>
</feature>
<feature type="site" description="Transition state stabilizer" evidence="1">
    <location>
        <position position="19"/>
    </location>
</feature>
<feature type="site" description="Positions MEP for the nucleophilic attack" evidence="1">
    <location>
        <position position="150"/>
    </location>
</feature>
<feature type="site" description="Positions MEP for the nucleophilic attack" evidence="1">
    <location>
        <position position="206"/>
    </location>
</feature>
<keyword id="KW-0414">Isoprene biosynthesis</keyword>
<keyword id="KW-0548">Nucleotidyltransferase</keyword>
<keyword id="KW-1185">Reference proteome</keyword>
<keyword id="KW-0808">Transferase</keyword>